<dbReference type="EMBL" id="M77090">
    <property type="protein sequence ID" value="AAA29288.1"/>
    <property type="molecule type" value="Genomic_DNA"/>
</dbReference>
<dbReference type="PIR" id="A41772">
    <property type="entry name" value="A41772"/>
</dbReference>
<dbReference type="PDB" id="6M1H">
    <property type="method" value="EM"/>
    <property type="resolution" value="3.60 A"/>
    <property type="chains" value="B=24-82"/>
</dbReference>
<dbReference type="PDB" id="7JQD">
    <property type="method" value="X-ray"/>
    <property type="resolution" value="2.70 A"/>
    <property type="chains" value="B=24-85"/>
</dbReference>
<dbReference type="PDBsum" id="6M1H"/>
<dbReference type="PDBsum" id="7JQD"/>
<dbReference type="EMDB" id="EMD-30047"/>
<dbReference type="SMR" id="P30659"/>
<dbReference type="VEuPathDB" id="VectorBase:LLONM1_000634"/>
<dbReference type="Proteomes" id="UP000092461">
    <property type="component" value="Unassembled WGS sequence"/>
</dbReference>
<dbReference type="GO" id="GO:0005576">
    <property type="term" value="C:extracellular region"/>
    <property type="evidence" value="ECO:0007669"/>
    <property type="project" value="UniProtKB-SubCell"/>
</dbReference>
<dbReference type="GO" id="GO:0042311">
    <property type="term" value="P:vasodilation"/>
    <property type="evidence" value="ECO:0007669"/>
    <property type="project" value="UniProtKB-KW"/>
</dbReference>
<proteinExistence type="evidence at protein level"/>
<feature type="signal peptide" evidence="6 7">
    <location>
        <begin position="1"/>
        <end position="23"/>
    </location>
</feature>
<feature type="chain" id="PRO_0000021655" description="Maxadilan" evidence="23">
    <location>
        <begin position="24"/>
        <end position="86"/>
    </location>
</feature>
<feature type="disulfide bond" evidence="11 13 26">
    <location>
        <begin position="24"/>
        <end position="28"/>
    </location>
</feature>
<feature type="disulfide bond" evidence="11 13 26">
    <location>
        <begin position="37"/>
        <end position="74"/>
    </location>
</feature>
<feature type="mutagenesis site" description="No significant effects on binding to the host receptor, induction of cAMP accumulation and erythema formation in host skin." evidence="2">
    <original>C</original>
    <variation>S</variation>
    <location>
        <position position="24"/>
    </location>
</feature>
<feature type="mutagenesis site" description="No significant effects on binding to the host receptor, induction of cAMP accumulation and erythema formation in host skin." evidence="2">
    <original>C</original>
    <variation>S</variation>
    <location>
        <position position="28"/>
    </location>
</feature>
<feature type="mutagenesis site" description="Abolishes activity and erythema formation in host skin." evidence="2">
    <original>C</original>
    <variation>S</variation>
    <location>
        <position position="37"/>
    </location>
</feature>
<feature type="mutagenesis site" description="Abolishes activity and erythema formation in host skin." evidence="2">
    <original>C</original>
    <variation>A</variation>
    <location>
        <position position="74"/>
    </location>
</feature>
<feature type="helix" evidence="27">
    <location>
        <begin position="26"/>
        <end position="40"/>
    </location>
</feature>
<feature type="helix" evidence="27">
    <location>
        <begin position="69"/>
        <end position="84"/>
    </location>
</feature>
<evidence type="ECO:0000269" key="1">
    <source>
    </source>
</evidence>
<evidence type="ECO:0000269" key="2">
    <source>
    </source>
</evidence>
<evidence type="ECO:0000269" key="3">
    <source>
    </source>
</evidence>
<evidence type="ECO:0000269" key="4">
    <source>
    </source>
</evidence>
<evidence type="ECO:0000269" key="5">
    <source>
    </source>
</evidence>
<evidence type="ECO:0000269" key="6">
    <source>
    </source>
</evidence>
<evidence type="ECO:0000269" key="7">
    <source>
    </source>
</evidence>
<evidence type="ECO:0000269" key="8">
    <source>
    </source>
</evidence>
<evidence type="ECO:0000269" key="9">
    <source>
    </source>
</evidence>
<evidence type="ECO:0000269" key="10">
    <source>
    </source>
</evidence>
<evidence type="ECO:0000269" key="11">
    <source>
    </source>
</evidence>
<evidence type="ECO:0000269" key="12">
    <source>
    </source>
</evidence>
<evidence type="ECO:0000269" key="13">
    <source>
    </source>
</evidence>
<evidence type="ECO:0000269" key="14">
    <source>
    </source>
</evidence>
<evidence type="ECO:0000303" key="15">
    <source>
    </source>
</evidence>
<evidence type="ECO:0000303" key="16">
    <source>
    </source>
</evidence>
<evidence type="ECO:0000303" key="17">
    <source>
    </source>
</evidence>
<evidence type="ECO:0000303" key="18">
    <source>
    </source>
</evidence>
<evidence type="ECO:0000303" key="19">
    <source>
    </source>
</evidence>
<evidence type="ECO:0000303" key="20">
    <source>
    </source>
</evidence>
<evidence type="ECO:0000303" key="21">
    <source>
    </source>
</evidence>
<evidence type="ECO:0000303" key="22">
    <source>
    </source>
</evidence>
<evidence type="ECO:0000305" key="23"/>
<evidence type="ECO:0000312" key="24">
    <source>
        <dbReference type="PDB" id="6M1H"/>
    </source>
</evidence>
<evidence type="ECO:0000312" key="25">
    <source>
        <dbReference type="PDB" id="7JQD"/>
    </source>
</evidence>
<evidence type="ECO:0007744" key="26">
    <source>
        <dbReference type="PDB" id="6M1H"/>
    </source>
</evidence>
<evidence type="ECO:0007829" key="27">
    <source>
        <dbReference type="PDB" id="7JQD"/>
    </source>
</evidence>
<protein>
    <recommendedName>
        <fullName evidence="15 16 17 18 20 21 22">Maxadilan</fullName>
        <shortName evidence="15 16 19">MAX</shortName>
    </recommendedName>
    <alternativeName>
        <fullName evidence="18">LJL08</fullName>
    </alternativeName>
</protein>
<organism>
    <name type="scientific">Lutzomyia longipalpis</name>
    <name type="common">Sand fly</name>
    <dbReference type="NCBI Taxonomy" id="7200"/>
    <lineage>
        <taxon>Eukaryota</taxon>
        <taxon>Metazoa</taxon>
        <taxon>Ecdysozoa</taxon>
        <taxon>Arthropoda</taxon>
        <taxon>Hexapoda</taxon>
        <taxon>Insecta</taxon>
        <taxon>Pterygota</taxon>
        <taxon>Neoptera</taxon>
        <taxon>Endopterygota</taxon>
        <taxon>Diptera</taxon>
        <taxon>Nematocera</taxon>
        <taxon>Psychodoidea</taxon>
        <taxon>Psychodidae</taxon>
        <taxon>Lutzomyia</taxon>
        <taxon>Lutzomyia</taxon>
    </lineage>
</organism>
<sequence>MKQILLISLVVVLAVFAFNVAEGCDATCQFRKAIDDCQKQAHHSNVLQTSVQTTATFTSMDTSQLPGNSVFKECMKQKKKEFSSGK</sequence>
<reference key="1">
    <citation type="journal article" date="1992" name="J. Biol. Chem.">
        <title>Maxadilan. Cloning and functional expression of the gene encoding this potent vasodilator peptide.</title>
        <authorList>
            <person name="Lerner E.A."/>
            <person name="Shoemaker C.B."/>
        </authorList>
    </citation>
    <scope>NUCLEOTIDE SEQUENCE [GENOMIC DNA]</scope>
    <scope>PROTEIN SEQUENCE OF 24-36</scope>
    <scope>FUNCTION</scope>
    <source>
        <tissue>Salivary gland</tissue>
    </source>
</reference>
<reference key="2">
    <citation type="journal article" date="2004" name="J. Exp. Biol.">
        <title>Identification of the most abundant secreted proteins from the salivary glands of the sand fly Lutzomyia longipalpis, vector of Leishmania chagasi.</title>
        <authorList>
            <person name="Valenzuela J.G."/>
            <person name="Garfield M."/>
            <person name="Rowton E.D."/>
            <person name="Pham V.M."/>
        </authorList>
    </citation>
    <scope>PROTEIN SEQUENCE OF 24-37</scope>
    <scope>TISSUE SPECIFICITY</scope>
</reference>
<reference key="3">
    <citation type="journal article" date="1991" name="J. Biol. Chem.">
        <title>Isolation of maxadilan, a potent vasodilatory peptide from the salivary glands of the sand fly Lutzomyia longipalpis.</title>
        <authorList>
            <person name="Lerner E.A."/>
            <person name="Ribeiro J.M."/>
            <person name="Nelson R.J."/>
            <person name="Lerner M.R."/>
        </authorList>
    </citation>
    <scope>FUNCTION</scope>
</reference>
<reference key="4">
    <citation type="journal article" date="1996" name="Rapid Commun. Mass Spectrom.">
        <title>Structural characterization and location of disulphide linkages of a potent vasodilatory peptide, recombinant maxadilan, by a multiple mass spectrometric approach.</title>
        <authorList>
            <person name="Yoshida S."/>
            <person name="Takamatsu T."/>
            <person name="Denda S."/>
            <person name="Ohnuma M."/>
            <person name="Tajima M."/>
            <person name="Lerner E.A."/>
            <person name="Kanda F."/>
        </authorList>
    </citation>
    <scope>DISULFIDE BONDS</scope>
</reference>
<reference key="5">
    <citation type="journal article" date="1997" name="J. Biol. Chem.">
        <title>Maxadilan, the vasodilator from sand flies, is a specific pituitary adenylate cyclase activating peptide type I receptor agonist.</title>
        <authorList>
            <person name="Moro O."/>
            <person name="Lerner E.A."/>
        </authorList>
    </citation>
    <scope>FUNCTION</scope>
</reference>
<reference key="6">
    <citation type="journal article" date="1999" name="J. Biol. Chem.">
        <title>Functional characterization of structural alterations in the sequence of the vasodilatory peptide maxadilan yields a pituitary adenylate cyclase-activating peptide type 1 receptor-specific antagonist.</title>
        <authorList>
            <person name="Moro O."/>
            <person name="Wakita K."/>
            <person name="Ohnuma M."/>
            <person name="Denda S."/>
            <person name="Lerner E.A."/>
            <person name="Tajima M."/>
        </authorList>
    </citation>
    <scope>FUNCTION</scope>
    <scope>MUTAGENESIS OF CYS-24; CYS-28; CYS-37 AND CYS-74</scope>
</reference>
<reference key="7">
    <citation type="journal article" date="1999" name="Insect Mol. Biol.">
        <title>Variation in the salivary peptide, maxadilan, from species in the Lutzomyia longipalpis complex.</title>
        <authorList>
            <person name="Lanzaro G.C."/>
            <person name="Lopes A.H."/>
            <person name="Ribeiro J.M.C."/>
            <person name="Shoemaker C.B."/>
            <person name="Warburg A."/>
            <person name="Soares M."/>
            <person name="Titus R.G."/>
        </authorList>
    </citation>
    <scope>POLYMORPHISM</scope>
</reference>
<reference key="8">
    <citation type="journal article" date="2001" name="J. Immunol.">
        <title>Sandfly maxadilan exacerbates infection with Leishmania major and vaccinating against it protects against L. major infection.</title>
        <authorList>
            <person name="Morris R.V."/>
            <person name="Shoemaker C.B."/>
            <person name="David J.R."/>
            <person name="Lanzaro G.C."/>
            <person name="Titus R.G."/>
        </authorList>
    </citation>
    <scope>FUNCTION (MICROBIAL INFECTION)</scope>
</reference>
<reference key="9">
    <citation type="journal article" date="2002" name="Pigment Cell Res.">
        <title>Maxadilan activates PAC1 receptors expressed in Xenopus laevis xelanophores.</title>
        <authorList>
            <person name="Pereira P."/>
            <person name="Reddy V.B."/>
            <person name="Kounga K."/>
            <person name="Bello Y."/>
            <person name="Lerner E."/>
        </authorList>
    </citation>
    <scope>FUNCTION</scope>
</reference>
<reference key="10">
    <citation type="journal article" date="2003" name="Parasite Immunol.">
        <title>Immunomodulatory effects of Maxadilan and Phlebotomus papatasi sand fly salivary gland lysates on human primary in vitro immune responses.</title>
        <authorList>
            <person name="Rogers K.A."/>
            <person name="Titus R.G."/>
        </authorList>
    </citation>
    <scope>FUNCTION</scope>
</reference>
<reference key="11">
    <citation type="journal article" date="2008" name="J. Immunol.">
        <title>Lutzomyia longipalpis salivary peptide maxadilan alters murine dendritic cell expression of CD80/86, CCR7, and cytokine secretion and reprograms dendritic cell-mediated cytokine release from cultures containing allogeneic T cells.</title>
        <authorList>
            <person name="Wheat W.H."/>
            <person name="Pauken K.E."/>
            <person name="Morris R.V."/>
            <person name="Titus R.G."/>
        </authorList>
    </citation>
    <scope>FUNCTION</scope>
</reference>
<reference key="12">
    <citation type="journal article" date="2017" name="Vaccine">
        <title>Immunization against full-length protein and peptides from the Lutzomyia longipalpis sand fly salivary component maxadilan protects against Leishmania major infection in a murine model.</title>
        <authorList>
            <person name="Wheat W.H."/>
            <person name="Arthun E.N."/>
            <person name="Spencer J.S."/>
            <person name="Regan D.P."/>
            <person name="Titus R.G."/>
            <person name="Dow S.W."/>
        </authorList>
    </citation>
    <scope>FUNCTION (MICROBIAL INFECTION)</scope>
</reference>
<reference evidence="24" key="13">
    <citation type="journal article" date="2020" name="Cell Res.">
        <title>Cryo-EM structures of PAC1 receptor reveal ligand binding mechanism.</title>
        <authorList>
            <person name="Wang J."/>
            <person name="Song X."/>
            <person name="Zhang D."/>
            <person name="Chen X."/>
            <person name="Li X."/>
            <person name="Sun Y."/>
            <person name="Li C."/>
            <person name="Song Y."/>
            <person name="Ding Y."/>
            <person name="Ren R."/>
            <person name="Harrington E.H."/>
            <person name="Hu L.A."/>
            <person name="Zhong W."/>
            <person name="Xu C."/>
            <person name="Huang X."/>
            <person name="Wang H.W."/>
            <person name="Ma Y."/>
        </authorList>
    </citation>
    <scope>STRUCTURE BY ELECTRON MICROSCOPY (3.60 ANGSTROMS) OF 24-82 IN COMPLEX WITH HOST MUTANT LEU-163; LEU-167; LEU-169; LEU-170; ALA-276; LEU-278 AND PHE-280 ADCYAP1R1</scope>
    <scope>FUNCTION</scope>
    <scope>INTERACTION WITH HUMAN ADCYAP1R1</scope>
    <scope>DISULFIDE BONDS</scope>
</reference>
<reference evidence="25" key="14">
    <citation type="journal article" date="2021" name="J. Med. Chem.">
        <title>Discovery of Selective Pituitary Adenylate Cyclase 1 Receptor (PAC1R) Antagonist Peptides Potent in a Maxadilan/PACAP38-Induced Increase in Blood Flow Pharmacodynamic Model.</title>
        <authorList>
            <person name="Hu E."/>
            <person name="Hong F.T."/>
            <person name="Aral J."/>
            <person name="Long J."/>
            <person name="Piper D.E."/>
            <person name="Poppe L."/>
            <person name="Andrews K.L."/>
            <person name="Hager T."/>
            <person name="Davis C."/>
            <person name="Li H."/>
            <person name="Wong P."/>
            <person name="Gavva N."/>
            <person name="Shi L."/>
            <person name="Zhu D.X.D."/>
            <person name="Lehto S.G."/>
            <person name="Xu C."/>
            <person name="Miranda L.P."/>
        </authorList>
    </citation>
    <scope>X-RAY CRYSTALLOGRAPHY (2.70 ANGSTROMS) OF 24-85 SYNTHETIC MUTANT PEPTIDE THAT ACTS AS ADCYAP1R1 ANTAGONIST</scope>
    <scope>FUNCTION</scope>
</reference>
<name>MAXA_LUTLO</name>
<accession>P30659</accession>
<comment type="function">
    <text evidence="2 4 5 7 8 9 11 12 14">Potent vasodilator (PubMed:1730635, PubMed:2040631, PubMed:33715378). Activates mammalian ADCYAP1R1, a PAC1 receptor, and induces cAMP accumulation in host cells (PubMed:10438479, PubMed:12453189, PubMed:32047270, PubMed:33715378, PubMed:8995389, PubMed:12911520). Causes the development of erythema following superficial injection into the rabbit or human skin (PubMed:10438479, PubMed:1730635, PubMed:2040631). Influences adaptive immune responses mediated by host dendritic cells (PubMed:18523295). Reduces surface expression of CD80 on host dendritic cells stimulated with lipopolysaccharides (LPS) and induces concomitant increase in CD86 expression on a subpopulation of these cells (PubMed:18523295). Redirects cytokine secretion by LPS-activated host dendritic cells toward type 2 responses: decreases secretion of TNF-alpha/TNF, IL-12p40/IL12B and IFN-gamma/IFNG, and increases secretion of IL6 and IL10 (PubMed:18523295). Reduces ability of host bone marrow-derived dendritic cells to stimulate proliferation of CD4(+) T-cells (PubMed:18523295). Reprograms the effect of LPS-activated host dendritic cells on cytokine secretion profiles in host T-cells: decreases secretion of TNF-alpha/TNF and IFN-gamma/IFNG, increases secretion of IL6 and IL13, and increases secretion of pro-inflammatory cytokine IL-1beta/IL1B in mixed lymphocyte reaction (MLR) cultures (PubMed:18523295). Reduces LPS-induced up-regulation of CCR7 in activated host dendritic cells (PubMed:18523295). Inhibits IFN-gamma/IFNG and IL-12p40/IL12B production by human peripheral blood mononuclear cells (PubMed:12911520). Increases IL6 and decreases TNF-alpha/TNF production by LPS-stimulated human monocytes (PubMed:12911520).</text>
</comment>
<comment type="function">
    <text evidence="3 10">(Microbial infection) Probably plays a critical role in the enhancement of Leishmania infectivity in the host attributed to sand fly saliva.</text>
</comment>
<comment type="subunit">
    <text evidence="11">Interacts with human ADCYAP1R1.</text>
</comment>
<comment type="subcellular location">
    <subcellularLocation>
        <location evidence="23">Secreted</location>
    </subcellularLocation>
</comment>
<comment type="tissue specificity">
    <text evidence="6">Salivary gland (at protein level).</text>
</comment>
<comment type="polymorphism">
    <text evidence="1">Extensive amino acid sequence differentiation, up to 23%, was observed among maxadilan from different populations. This is a remarkable degree of polymorphism considering the small size of this peptide.</text>
</comment>
<comment type="miscellaneous">
    <text evidence="3 10 12">Vaccination against the protein protects mice from infection with Leishmania major (PubMed:11673536, PubMed:29079105). Several synthetic peptides derived from maxadilan act as antagonists for ADCYAP1R1 in functional assays and in rat maxadilan/PACAP-38-induced increase in blood flow pharmacodynamic model (PubMed:33715378).</text>
</comment>
<keyword id="KW-0002">3D-structure</keyword>
<keyword id="KW-0903">Direct protein sequencing</keyword>
<keyword id="KW-1015">Disulfide bond</keyword>
<keyword id="KW-0964">Secreted</keyword>
<keyword id="KW-0732">Signal</keyword>
<keyword id="KW-0838">Vasoactive</keyword>
<keyword id="KW-0840">Vasodilator</keyword>